<sequence>MHTQVHTARLVHTADLDSETRQDIRQMVTGAFAGDFTETDWEHTLGGMHALIWHHGAIIAHAAVIQRRLIYRGNALRCGYVEGVAVRADWRGQRLVSALLDAVEQVMRGAYQLGALSSSARARRLYASRGWLPWHGPTSVLAPTGPVRTPDDDGTVFVLPIDISLDTSAELMCDWRAGDVW</sequence>
<name>AAC2_MYCTO</name>
<keyword id="KW-0012">Acyltransferase</keyword>
<keyword id="KW-0046">Antibiotic resistance</keyword>
<keyword id="KW-1185">Reference proteome</keyword>
<keyword id="KW-0808">Transferase</keyword>
<reference key="1">
    <citation type="journal article" date="2002" name="J. Bacteriol.">
        <title>Whole-genome comparison of Mycobacterium tuberculosis clinical and laboratory strains.</title>
        <authorList>
            <person name="Fleischmann R.D."/>
            <person name="Alland D."/>
            <person name="Eisen J.A."/>
            <person name="Carpenter L."/>
            <person name="White O."/>
            <person name="Peterson J.D."/>
            <person name="DeBoy R.T."/>
            <person name="Dodson R.J."/>
            <person name="Gwinn M.L."/>
            <person name="Haft D.H."/>
            <person name="Hickey E.K."/>
            <person name="Kolonay J.F."/>
            <person name="Nelson W.C."/>
            <person name="Umayam L.A."/>
            <person name="Ermolaeva M.D."/>
            <person name="Salzberg S.L."/>
            <person name="Delcher A."/>
            <person name="Utterback T.R."/>
            <person name="Weidman J.F."/>
            <person name="Khouri H.M."/>
            <person name="Gill J."/>
            <person name="Mikula A."/>
            <person name="Bishai W."/>
            <person name="Jacobs W.R. Jr."/>
            <person name="Venter J.C."/>
            <person name="Fraser C.M."/>
        </authorList>
    </citation>
    <scope>NUCLEOTIDE SEQUENCE [LARGE SCALE GENOMIC DNA]</scope>
    <source>
        <strain>CDC 1551 / Oshkosh</strain>
    </source>
</reference>
<gene>
    <name type="primary">aac</name>
    <name type="ordered locus">MT0275</name>
</gene>
<comment type="function">
    <text evidence="1">Catalyzes the coenzyme A-dependent acetylation of the 2' hydroxyl or amino group of a broad spectrum of aminoglycosides. It confers resistance to aminoglycosides (By similarity).</text>
</comment>
<comment type="subunit">
    <text evidence="2">Homodimer.</text>
</comment>
<comment type="similarity">
    <text evidence="4">Belongs to the AAC(2')-I acetyltransferase family.</text>
</comment>
<feature type="chain" id="PRO_0000426777" description="Aminoglycoside 2'-N-acetyltransferase">
    <location>
        <begin position="1"/>
        <end position="181"/>
    </location>
</feature>
<feature type="domain" description="N-acetyltransferase" evidence="3">
    <location>
        <begin position="11"/>
        <end position="162"/>
    </location>
</feature>
<feature type="binding site" evidence="2">
    <location>
        <position position="35"/>
    </location>
    <ligand>
        <name>substrate</name>
    </ligand>
</feature>
<feature type="binding site" evidence="2">
    <location>
        <begin position="82"/>
        <end position="83"/>
    </location>
    <ligand>
        <name>substrate</name>
    </ligand>
</feature>
<feature type="binding site" evidence="2">
    <location>
        <begin position="84"/>
        <end position="86"/>
    </location>
    <ligand>
        <name>CoA</name>
        <dbReference type="ChEBI" id="CHEBI:57287"/>
    </ligand>
</feature>
<feature type="binding site" evidence="2">
    <location>
        <begin position="91"/>
        <end position="96"/>
    </location>
    <ligand>
        <name>CoA</name>
        <dbReference type="ChEBI" id="CHEBI:57287"/>
    </ligand>
</feature>
<feature type="binding site" evidence="2">
    <location>
        <position position="117"/>
    </location>
    <ligand>
        <name>substrate</name>
    </ligand>
</feature>
<feature type="binding site" evidence="2">
    <location>
        <begin position="151"/>
        <end position="152"/>
    </location>
    <ligand>
        <name>substrate</name>
    </ligand>
</feature>
<organism>
    <name type="scientific">Mycobacterium tuberculosis (strain CDC 1551 / Oshkosh)</name>
    <dbReference type="NCBI Taxonomy" id="83331"/>
    <lineage>
        <taxon>Bacteria</taxon>
        <taxon>Bacillati</taxon>
        <taxon>Actinomycetota</taxon>
        <taxon>Actinomycetes</taxon>
        <taxon>Mycobacteriales</taxon>
        <taxon>Mycobacteriaceae</taxon>
        <taxon>Mycobacterium</taxon>
        <taxon>Mycobacterium tuberculosis complex</taxon>
    </lineage>
</organism>
<accession>P9WQG8</accession>
<accession>L0T655</accession>
<accession>P0A5N0</accession>
<accession>P72033</accession>
<accession>P95219</accession>
<dbReference type="EC" id="2.3.1.-"/>
<dbReference type="EMBL" id="AE000516">
    <property type="protein sequence ID" value="AAK44495.1"/>
    <property type="molecule type" value="Genomic_DNA"/>
</dbReference>
<dbReference type="PIR" id="A70627">
    <property type="entry name" value="A70627"/>
</dbReference>
<dbReference type="SMR" id="P9WQG8"/>
<dbReference type="KEGG" id="mtc:MT0275"/>
<dbReference type="PATRIC" id="fig|83331.31.peg.293"/>
<dbReference type="HOGENOM" id="CLU_106718_0_0_11"/>
<dbReference type="Proteomes" id="UP000001020">
    <property type="component" value="Chromosome"/>
</dbReference>
<dbReference type="GO" id="GO:0016747">
    <property type="term" value="F:acyltransferase activity, transferring groups other than amino-acyl groups"/>
    <property type="evidence" value="ECO:0007669"/>
    <property type="project" value="InterPro"/>
</dbReference>
<dbReference type="GO" id="GO:0046677">
    <property type="term" value="P:response to antibiotic"/>
    <property type="evidence" value="ECO:0007669"/>
    <property type="project" value="UniProtKB-KW"/>
</dbReference>
<dbReference type="CDD" id="cd04301">
    <property type="entry name" value="NAT_SF"/>
    <property type="match status" value="1"/>
</dbReference>
<dbReference type="FunFam" id="3.40.630.30:FF:000149">
    <property type="entry name" value="Aminoglycoside 2'-N-acetyltransferase AAC (AAC(2')-IC)"/>
    <property type="match status" value="1"/>
</dbReference>
<dbReference type="Gene3D" id="3.40.630.30">
    <property type="match status" value="1"/>
</dbReference>
<dbReference type="InterPro" id="IPR016181">
    <property type="entry name" value="Acyl_CoA_acyltransferase"/>
</dbReference>
<dbReference type="InterPro" id="IPR000182">
    <property type="entry name" value="GNAT_dom"/>
</dbReference>
<dbReference type="NCBIfam" id="NF000034">
    <property type="entry name" value="AAC_2p_Ic"/>
    <property type="match status" value="1"/>
</dbReference>
<dbReference type="Pfam" id="PF13527">
    <property type="entry name" value="Acetyltransf_9"/>
    <property type="match status" value="1"/>
</dbReference>
<dbReference type="SUPFAM" id="SSF55729">
    <property type="entry name" value="Acyl-CoA N-acyltransferases (Nat)"/>
    <property type="match status" value="1"/>
</dbReference>
<dbReference type="PROSITE" id="PS51186">
    <property type="entry name" value="GNAT"/>
    <property type="match status" value="1"/>
</dbReference>
<evidence type="ECO:0000250" key="1">
    <source>
        <dbReference type="UniProtKB" id="P94968"/>
    </source>
</evidence>
<evidence type="ECO:0000250" key="2">
    <source>
        <dbReference type="UniProtKB" id="P9WQG9"/>
    </source>
</evidence>
<evidence type="ECO:0000255" key="3">
    <source>
        <dbReference type="PROSITE-ProRule" id="PRU00532"/>
    </source>
</evidence>
<evidence type="ECO:0000305" key="4"/>
<proteinExistence type="inferred from homology"/>
<protein>
    <recommendedName>
        <fullName>Aminoglycoside 2'-N-acetyltransferase</fullName>
        <ecNumber>2.3.1.-</ecNumber>
    </recommendedName>
    <alternativeName>
        <fullName>AAC(2')-Ic</fullName>
    </alternativeName>
</protein>